<gene>
    <name evidence="9 10 11 14 15" type="primary">eae</name>
    <name evidence="12 15" type="synonym">eaeA</name>
    <name type="ordered locus">Z5110</name>
    <name type="ordered locus">ECs4559</name>
    <name type="ORF">L0025</name>
</gene>
<accession>P43261</accession>
<accession>O85627</accession>
<accession>Q47168</accession>
<sequence length="934" mass="101836">MITHGCYTRTRHKHKLKKTLIMLSAGLGLFFYVNQNSFANGENYFKLGSDSKLLTHDSYQNRLFYTLKTGETVADLSKSQDINLSTIWSLNKHLYSSESEMMKAAPGQQIILPLKKLPFEYSALPLLGSAPLVAAGGVAGHTNKLTKMSPDVTKSNMTDDKALNYAAQQAASLGSQLQSRSLNGDYAKDTALGIAGNQASSQLQAWLQHYGTAEVNLQSGNNFDGSSLDFLLPFYDSEKMLAFGQVGARYIDSRFTANLGAGQRFFLPANMLGYNVFIDQDFSGDNTRLGIGGEYWRDYFKSSVNGYFRMSGWHESYNKKDYDERPANGFDIRFNGYLPSYPALGAKLIYEQYYGDNVALFNSDKLQSNPGAATVGVNYTPIPLVTMGIDYRHGTGNENDLLYSMQFRYQFDKSWSQQIEPQYVNELRTLSGSRYDLVQRNNNIILEYKKQDILSLNIPHDINGTEHSTQKIQLIVKSKYGLDRIVWDDSALRSQGGQIQHSGSQSAQDYQAILPAYVQGGSNIYKVTARAYDRNGNSSNNVQLTITVLSNGQVVDQVGVTDFTADKTSAKADNADTITYTATVKKNGVAQANVPVSFNIVSGTATLGANSAKTDANGKATVTLKSSTPGQVVVSAKTAEMTSALNASAVIFFDQTKASITEIKADKTTAVANGKDAIKYTVKVMKNGQPVNNQSVTFSTNFGMFNGKSQTQATTGNDGRATITLTSSSAGKATVSATVSDGAEVKATEVTFFDELKIDNKVDIIGNNVRGELPNIWLQYGQFKLKASGGDGTYSWYSENTSIATVDASGKVTLNGKGSVVIKATSGDKQTVSYTIKAPSYMIKVDKQAYYADAMSICKNLLPSTQTVLSDIYDSWGAANKYSHYSSMNSITAWIKQTSSEQRSGVSSTYNLITQNPLPGVNVNTPNVYAVCVE</sequence>
<evidence type="ECO:0000250" key="1">
    <source>
        <dbReference type="UniProtKB" id="P19809"/>
    </source>
</evidence>
<evidence type="ECO:0000255" key="2"/>
<evidence type="ECO:0000255" key="3">
    <source>
        <dbReference type="PROSITE-ProRule" id="PRU00445"/>
    </source>
</evidence>
<evidence type="ECO:0000255" key="4">
    <source>
        <dbReference type="PROSITE-ProRule" id="PRU01118"/>
    </source>
</evidence>
<evidence type="ECO:0000269" key="5">
    <source>
    </source>
</evidence>
<evidence type="ECO:0000269" key="6">
    <source>
    </source>
</evidence>
<evidence type="ECO:0000269" key="7">
    <source>
    </source>
</evidence>
<evidence type="ECO:0000269" key="8">
    <source ref="9"/>
</evidence>
<evidence type="ECO:0000303" key="9">
    <source>
    </source>
</evidence>
<evidence type="ECO:0000303" key="10">
    <source>
    </source>
</evidence>
<evidence type="ECO:0000303" key="11">
    <source>
    </source>
</evidence>
<evidence type="ECO:0000303" key="12">
    <source>
    </source>
</evidence>
<evidence type="ECO:0000303" key="13">
    <source>
    </source>
</evidence>
<evidence type="ECO:0000303" key="14">
    <source>
    </source>
</evidence>
<evidence type="ECO:0000303" key="15">
    <source>
    </source>
</evidence>
<evidence type="ECO:0000303" key="16">
    <source ref="9"/>
</evidence>
<evidence type="ECO:0000305" key="17"/>
<evidence type="ECO:0000305" key="18">
    <source>
    </source>
</evidence>
<evidence type="ECO:0000305" key="19">
    <source>
    </source>
</evidence>
<evidence type="ECO:0007744" key="20">
    <source>
        <dbReference type="PDB" id="2ZQK"/>
    </source>
</evidence>
<evidence type="ECO:0007744" key="21">
    <source>
        <dbReference type="PDB" id="2ZWK"/>
    </source>
</evidence>
<evidence type="ECO:0007744" key="22">
    <source>
        <dbReference type="PDB" id="3NCW"/>
    </source>
</evidence>
<evidence type="ECO:0007744" key="23">
    <source>
        <dbReference type="PDB" id="3NCX"/>
    </source>
</evidence>
<evidence type="ECO:0007744" key="24">
    <source>
        <dbReference type="PDB" id="4E1S"/>
    </source>
</evidence>
<evidence type="ECO:0007744" key="25">
    <source>
        <dbReference type="PDB" id="5G26"/>
    </source>
</evidence>
<evidence type="ECO:0007829" key="26">
    <source>
        <dbReference type="PDB" id="2ZWK"/>
    </source>
</evidence>
<evidence type="ECO:0007829" key="27">
    <source>
        <dbReference type="PDB" id="3NCX"/>
    </source>
</evidence>
<evidence type="ECO:0007829" key="28">
    <source>
        <dbReference type="PDB" id="4E1S"/>
    </source>
</evidence>
<comment type="function">
    <text evidence="1 17">An inverse autotransporter. Adhesin, which mediates attachment to the human intestine epithelial cells. Necessary for the production of attaching and effacing lesions on infected human tissue culture cells. Anchored to the outer membrane by binding to peptidoglycan (PGN) via its periplasmic domain, thus helping in receptor interactions during host invasion (Probable). PGN-binding may also aid in resisting mechanical and chemical stress during transit of the bacterium through the gastrointestinal tract of the host (Probable).</text>
</comment>
<comment type="subunit">
    <text evidence="1 8">Homodimer (By similarity). Interacts with Tir (Ref.9).</text>
</comment>
<comment type="subcellular location">
    <subcellularLocation>
        <location evidence="6 7">Cell outer membrane</location>
    </subcellularLocation>
    <text evidence="19">The passenger domain is exposed on the bacterial cell surface.</text>
</comment>
<comment type="domain">
    <text evidence="19">Has a signal sequence, a periplasmic Lys M domain, an inverse autotransporter domain (residues 210-411) predicted to form an outer membrane-embedded 12-stranded beta-barrel, followed by a linker domain (residues 412-449) also embedded in the outer membrane, and an extracellular passenger domain (residues 450-934) with a tightly-folded proteinase K (PK)-resistant, non-Big domain (residues 450-550), 3 Big domains and a C-type lectin domain. Linker domain is important for the stability of the beta-barrel and spans the barrel pore in an extended conformation creating a large cavity on one side of the barrel pore. Beta-barrel forms a hydrophilic pore for the translocation of the passenger domain to the bacterial cell surface.</text>
</comment>
<comment type="miscellaneous">
    <text evidence="17">'Inverse' autotransporters have an N-terminal translocation domain followed by the passenger domain, as opposed to 'classical' autotransporters which have N-terminal passenger and C-terminal translocation domains.</text>
</comment>
<comment type="similarity">
    <text evidence="17">Belongs to the intimin/invasin family.</text>
</comment>
<name>EAE_ECO57</name>
<proteinExistence type="evidence at protein level"/>
<feature type="signal peptide" evidence="2">
    <location>
        <begin position="1"/>
        <end position="39"/>
    </location>
</feature>
<feature type="chain" id="PRO_0000211828" description="Intimin" evidence="2">
    <location>
        <begin position="40"/>
        <end position="934"/>
    </location>
</feature>
<feature type="domain" description="LysM" evidence="4">
    <location>
        <begin position="63"/>
        <end position="112"/>
    </location>
</feature>
<feature type="domain" description="Big-1 1" evidence="3">
    <location>
        <begin position="560"/>
        <end position="653"/>
    </location>
</feature>
<feature type="domain" description="Big-1 2" evidence="3">
    <location>
        <begin position="660"/>
        <end position="753"/>
    </location>
</feature>
<feature type="domain" description="BIG2" evidence="2">
    <location>
        <begin position="787"/>
        <end position="833"/>
    </location>
</feature>
<feature type="region of interest" description="Required for periplasmic localization" evidence="1">
    <location>
        <begin position="40"/>
        <end position="212"/>
    </location>
</feature>
<feature type="region of interest" description="Peptidoglycan-binding" evidence="1">
    <location>
        <begin position="40"/>
        <end position="153"/>
    </location>
</feature>
<feature type="region of interest" description="Sufficient for homodimerization" evidence="1">
    <location>
        <begin position="40"/>
        <end position="153"/>
    </location>
</feature>
<feature type="region of interest" description="Inverse autotransporter" evidence="19">
    <location>
        <begin position="210"/>
        <end position="411"/>
    </location>
</feature>
<feature type="region of interest" description="Signature sequence for beta-barrel assembly machinery (BAM), which recognizes the unfolded beta-barrel in the periplasm" evidence="19">
    <location>
        <begin position="402"/>
        <end position="411"/>
    </location>
</feature>
<feature type="region of interest" description="Minimum linker residues necessary for formation of a heat-modifiable beta-barrel" evidence="6">
    <location>
        <begin position="437"/>
        <end position="449"/>
    </location>
</feature>
<feature type="region of interest" description="Intimin receptor Tir-binding" evidence="18">
    <location>
        <begin position="747"/>
        <end position="934"/>
    </location>
</feature>
<feature type="site" description="Implicated in intimin receptor Tir-binding" evidence="1">
    <location>
        <position position="891"/>
    </location>
</feature>
<feature type="site" description="Implicated in intimin receptor Tir-binding" evidence="1">
    <location>
        <position position="894"/>
    </location>
</feature>
<feature type="site" description="Implicated in intimin receptor Tir-binding" evidence="1">
    <location>
        <position position="898"/>
    </location>
</feature>
<feature type="site" description="Implicated in intimin receptor Tir-binding" evidence="1">
    <location>
        <position position="906"/>
    </location>
</feature>
<feature type="site" description="Implicated in intimin receptor Tir-binding" evidence="1">
    <location>
        <position position="908"/>
    </location>
</feature>
<feature type="site" description="Implicated in intimin receptor Tir-binding" evidence="1">
    <location>
        <position position="909"/>
    </location>
</feature>
<feature type="site" description="Implicated in intimin receptor Tir-binding" evidence="1">
    <location>
        <position position="915"/>
    </location>
</feature>
<feature type="site" description="Implicated in intimin receptor Tir-binding" evidence="1">
    <location>
        <position position="927"/>
    </location>
</feature>
<feature type="site" description="Implicated in intimin receptor Tir-binding" evidence="1">
    <location>
        <position position="929"/>
    </location>
</feature>
<feature type="site" description="Implicated in intimin receptor Tir-binding" evidence="1">
    <location>
        <position position="933"/>
    </location>
</feature>
<feature type="disulfide bond" evidence="5 8 20 21 22 23">
    <location>
        <begin position="858"/>
        <end position="932"/>
    </location>
</feature>
<feature type="mutagenesis site" description="Disrupted salt-bridge between the beta-barrel and the linker, but no effect since acts as the wild-type intimin construct consisting of residues 1-530; when associated with deletion of 531-A--E-934." evidence="6">
    <original>D</original>
    <variation>A</variation>
    <location>
        <position position="236"/>
    </location>
</feature>
<feature type="mutagenesis site" description="Disrupted salt-bridge between the beta-barrel and the linker, but no effect since acts as the wild-type intimin construct consisting of residues 1-530; when associated with deletion of 531-A--E-934." evidence="6">
    <original>D</original>
    <variation>A</variation>
    <location>
        <position position="279"/>
    </location>
</feature>
<feature type="mutagenesis site" description="Loss of heat-modifiability since remains as unfolded, elongated protein in SDS sample buffer at both room temperature and at 110 degrees Celsius. Unfolded, elongated protein migrates slower during SDS-PAGE than the folded beta-barrel. No surface exposure of the passenger upon proteinase K treatment as indicated by the loss of appearance of a lower molecular weight band in SDS-PAGE." evidence="6">
    <location>
        <begin position="401"/>
        <end position="934"/>
    </location>
</feature>
<feature type="mutagenesis site" description="Loss of heat-modifiability since remains as unfolded, elongated protein in SDS sample buffer at both room temperature and at 110 degrees Celsius. Unfolded, elongated protein migrates slower during SDS-PAGE than the folded beta-barrel. No surface exposure of the passenger upon proteinase K treatment as indicated by the loss of appearance of a lower molecular weight band in SDS-PAGE." evidence="6">
    <location>
        <begin position="412"/>
        <end position="934"/>
    </location>
</feature>
<feature type="mutagenesis site" description="Periplasmic alpha-helix mutant, but no effect since acts as the wild-type intimin construct consisting of residues 1-530; when associated with deletion of 531-A--E-934." evidence="6">
    <original>SWSQQIEPQYVNELRTLSGS</original>
    <variation>GG</variation>
    <location>
        <begin position="414"/>
        <end position="433"/>
    </location>
</feature>
<feature type="mutagenesis site" description="Loss of heat-modifiability since remains as unfolded, elongated protein in SDS sample buffer at both room temperature and at 110 degrees Celsius. Unfolded, elongated protein migrates slower during SDS-PAGE than the folded beta-barrel. No surface exposure of the passenger upon proteinase K treatment as indicated by the loss of appearance of a lower molecular weight band in SDS-PAGE." evidence="6">
    <location>
        <begin position="431"/>
        <end position="934"/>
    </location>
</feature>
<feature type="mutagenesis site" description="Disrupted salt-bridge between the beta-barrel and the linker, but no effect since acts as the wild-type intimin construct consisting of residues 1-530; when associated with deletion of 531-A--E-934." evidence="6">
    <original>R</original>
    <variation>A</variation>
    <location>
        <position position="434"/>
    </location>
</feature>
<feature type="mutagenesis site" description="Loss of heat-modifiability since remains as unfolded, elongated protein in SDS sample buffer at both room temperature and at 110 degrees Celsius. Unfolded, elongated protein migrates slower during SDS_PAGE than the folded beta-barrel." evidence="6">
    <location>
        <begin position="435"/>
        <end position="934"/>
    </location>
</feature>
<feature type="mutagenesis site" description="Disrupted salt-bridge between the beta-barrel and the linker, but no effect since acts as the wild-type intimin construct consisting of residues 1-530; when associated with deletion of 531-A--E-934." evidence="6">
    <original>D</original>
    <variation>A</variation>
    <location>
        <position position="436"/>
    </location>
</feature>
<feature type="mutagenesis site" description="Loss of heat-modifiability since remains as unfolded, elongated protein in SDS sample buffer at both room temperature and at 110 degrees Celsius. Unfolded, elongated protein migrates slower during SDS-PAGE than the folded beta-barrel." evidence="6">
    <location>
        <begin position="437"/>
        <end position="934"/>
    </location>
</feature>
<feature type="mutagenesis site" description="Heat-modifiable since remains as folded beta-barrel in SDS sample buffer at room temperature, but unfolds/elongates upon heating. Compact barrel migrates faster during SDS-PAGE than the unfolded, elongated protein." evidence="6">
    <location>
        <begin position="439"/>
        <end position="934"/>
    </location>
</feature>
<feature type="mutagenesis site" description="Disrupted salt-bridge between the beta-barrel and the linker, but no effect since acts as the wild-type intimin construct consisting of residues 1-530; when associated with deletion of 531-A--E-934." evidence="6">
    <original>R</original>
    <variation>A</variation>
    <location>
        <position position="440"/>
    </location>
</feature>
<feature type="mutagenesis site" description="Heat-modifiable since remains as folded beta-barrel in SDS sample buffer at room temperature, but unfolds/elongates upon heating. Compact barrel migrates faster during SDS-PAGE than the unfolded, elongated protein." evidence="6">
    <location>
        <begin position="441"/>
        <end position="934"/>
    </location>
</feature>
<feature type="mutagenesis site" description="Heat-modifiable since remains as folded beta-barrel in SDS sample buffer at room temperature, but unfolds/elongates upon heating. Compact barrel migrates faster during SDS-PAGE than the unfolded, elongated protein." evidence="6">
    <location>
        <begin position="443"/>
        <end position="934"/>
    </location>
</feature>
<feature type="mutagenesis site" description="Heat-modifiable since remains as folded beta-barrel in SDS sample buffer at room temperature, but unfolds/elongates upon heating. Compact barrel migrates faster during SDS-PAGE than the unfolded, elongated protein." evidence="6">
    <location>
        <begin position="445"/>
        <end position="934"/>
    </location>
</feature>
<feature type="mutagenesis site" description="Heat-modifiable since remains as folded beta-barrel in SDS sample buffer at room temperature, but unfolds/elongates upon heating. Compact barrel migrates faster during SDS-PAGE than the unfolded, elongated protein." evidence="6">
    <location>
        <begin position="447"/>
        <end position="934"/>
    </location>
</feature>
<feature type="mutagenesis site" description="Heat-modifiable since remains as folded beta-barrel in SDS sample buffer at room temperature, but unfolds/elongates upon heating. Compact barrel migrates faster during SDS-PAGE than the unfolded, elongated protein." evidence="6">
    <location>
        <begin position="449"/>
        <end position="934"/>
    </location>
</feature>
<feature type="mutagenesis site" description="Heat-modifiable since remains as folded beta-barrel in SDS sample buffer at room temperature, but unfolds/elongates upon heating. Compact barrel migrates faster during SDS-PAGE than the unfolded, elongated protein. No surface exposure of the passenger upon proteinase K treatment as indicated by the loss of appearance of a lower molecular weight band in SDS-PAGE." evidence="6">
    <location>
        <begin position="451"/>
        <end position="934"/>
    </location>
</feature>
<feature type="mutagenesis site" description="Heat-modifiable since remains as folded beta-barrel in SDS sample buffer at room temperature, but unfolds/elongates upon heating. Compact barrel migrates faster during SDS-PAGE than the unfolded, elongated protein. Surface exposure of the passenger upon proteinase K treatment as indicated by the appearance of a lower molecular weight band in SDS-PAGE." evidence="6">
    <location>
        <begin position="501"/>
        <end position="934"/>
    </location>
</feature>
<feature type="mutagenesis site" description="Heat-modifiable since remains as folded beta-barrel in SDS sample buffer at room temperature, but unfolds/elongates upon heating. Compact barrel migrates faster during SDS-PAGE than the unfolded, elongated protein. Surface exposure of the passenger upon proteinase K treatment as indicated by the appearance of a lower molecular weight band in SDS-PAGE. No effect, acts as the wild-type intimin construct consisting of residues 1-530; when associated with A-236; A-279; A-434; A-436 or A-440. No effect since acts as the wild-type intimin construct consisting of residues 1-530; when associated with 414-G--G-433." evidence="6">
    <location>
        <begin position="531"/>
        <end position="934"/>
    </location>
</feature>
<feature type="mutagenesis site" description="Heat-modifiable since remains as folded beta-barrel in SDS sample buffer at room temperature, but unfolds/elongates upon heating. Compact barrel migrates faster during SDS-PAGE than the unfolded, elongated protein. No surface exposure of the passenger upon proteinase K treatment as indicated by the loss of appearance of a lower molecular weight band in SDS-PAGE." evidence="6">
    <location>
        <begin position="551"/>
        <end position="934"/>
    </location>
</feature>
<feature type="sequence conflict" description="In Ref. 1; CAA77642." evidence="17" ref="1">
    <original>N</original>
    <variation>D</variation>
    <location>
        <position position="221"/>
    </location>
</feature>
<feature type="sequence conflict" description="In Ref. 1; CAA77642." evidence="17" ref="1">
    <original>SG</original>
    <variation>RR</variation>
    <location>
        <begin position="311"/>
        <end position="312"/>
    </location>
</feature>
<feature type="sequence conflict" description="In Ref. 1; CAA77642." evidence="17" ref="1">
    <original>N</original>
    <variation>H</variation>
    <location>
        <position position="318"/>
    </location>
</feature>
<feature type="sequence conflict" description="In Ref. 1; CAA77642." evidence="17" ref="1">
    <original>T</original>
    <variation>S</variation>
    <location>
        <position position="642"/>
    </location>
</feature>
<feature type="sequence conflict" description="In Ref. 2." evidence="17" ref="2">
    <original>V</original>
    <variation>VK</variation>
    <location>
        <position position="769"/>
    </location>
</feature>
<feature type="sequence conflict" description="In Ref. 2." evidence="17" ref="2">
    <original>GE</original>
    <variation>SM</variation>
    <location>
        <begin position="771"/>
        <end position="772"/>
    </location>
</feature>
<feature type="sequence conflict" description="In Ref. 8; AAA21468." evidence="17" ref="8">
    <original>R</original>
    <variation>S</variation>
    <location>
        <position position="903"/>
    </location>
</feature>
<feature type="strand" evidence="28">
    <location>
        <begin position="212"/>
        <end position="221"/>
    </location>
</feature>
<feature type="strand" evidence="28">
    <location>
        <begin position="225"/>
        <end position="236"/>
    </location>
</feature>
<feature type="strand" evidence="28">
    <location>
        <begin position="238"/>
        <end position="251"/>
    </location>
</feature>
<feature type="strand" evidence="28">
    <location>
        <begin position="254"/>
        <end position="266"/>
    </location>
</feature>
<feature type="strand" evidence="28">
    <location>
        <begin position="271"/>
        <end position="281"/>
    </location>
</feature>
<feature type="turn" evidence="28">
    <location>
        <begin position="282"/>
        <end position="285"/>
    </location>
</feature>
<feature type="strand" evidence="28">
    <location>
        <begin position="286"/>
        <end position="297"/>
    </location>
</feature>
<feature type="strand" evidence="28">
    <location>
        <begin position="300"/>
        <end position="309"/>
    </location>
</feature>
<feature type="strand" evidence="28">
    <location>
        <begin position="317"/>
        <end position="319"/>
    </location>
</feature>
<feature type="strand" evidence="28">
    <location>
        <begin position="323"/>
        <end position="326"/>
    </location>
</feature>
<feature type="strand" evidence="28">
    <location>
        <begin position="329"/>
        <end position="338"/>
    </location>
</feature>
<feature type="strand" evidence="28">
    <location>
        <begin position="341"/>
        <end position="353"/>
    </location>
</feature>
<feature type="strand" evidence="28">
    <location>
        <begin position="355"/>
        <end position="358"/>
    </location>
</feature>
<feature type="strand" evidence="28">
    <location>
        <begin position="363"/>
        <end position="365"/>
    </location>
</feature>
<feature type="strand" evidence="28">
    <location>
        <begin position="367"/>
        <end position="369"/>
    </location>
</feature>
<feature type="strand" evidence="28">
    <location>
        <begin position="371"/>
        <end position="382"/>
    </location>
</feature>
<feature type="strand" evidence="28">
    <location>
        <begin position="385"/>
        <end position="394"/>
    </location>
</feature>
<feature type="helix" evidence="28">
    <location>
        <begin position="395"/>
        <end position="397"/>
    </location>
</feature>
<feature type="strand" evidence="28">
    <location>
        <begin position="398"/>
        <end position="410"/>
    </location>
</feature>
<feature type="helix" evidence="28">
    <location>
        <begin position="415"/>
        <end position="418"/>
    </location>
</feature>
<feature type="helix" evidence="28">
    <location>
        <begin position="423"/>
        <end position="428"/>
    </location>
</feature>
<feature type="turn" evidence="28">
    <location>
        <begin position="430"/>
        <end position="432"/>
    </location>
</feature>
<feature type="strand" evidence="28">
    <location>
        <begin position="446"/>
        <end position="448"/>
    </location>
</feature>
<feature type="strand" evidence="27">
    <location>
        <begin position="760"/>
        <end position="764"/>
    </location>
</feature>
<feature type="turn" evidence="27">
    <location>
        <begin position="765"/>
        <end position="768"/>
    </location>
</feature>
<feature type="strand" evidence="27">
    <location>
        <begin position="769"/>
        <end position="772"/>
    </location>
</feature>
<feature type="strand" evidence="27">
    <location>
        <begin position="775"/>
        <end position="778"/>
    </location>
</feature>
<feature type="strand" evidence="27">
    <location>
        <begin position="782"/>
        <end position="784"/>
    </location>
</feature>
<feature type="strand" evidence="27">
    <location>
        <begin position="787"/>
        <end position="789"/>
    </location>
</feature>
<feature type="strand" evidence="27">
    <location>
        <begin position="794"/>
        <end position="799"/>
    </location>
</feature>
<feature type="turn" evidence="27">
    <location>
        <begin position="801"/>
        <end position="803"/>
    </location>
</feature>
<feature type="strand" evidence="27">
    <location>
        <begin position="804"/>
        <end position="806"/>
    </location>
</feature>
<feature type="strand" evidence="27">
    <location>
        <begin position="810"/>
        <end position="814"/>
    </location>
</feature>
<feature type="strand" evidence="27">
    <location>
        <begin position="816"/>
        <end position="818"/>
    </location>
</feature>
<feature type="strand" evidence="27">
    <location>
        <begin position="820"/>
        <end position="826"/>
    </location>
</feature>
<feature type="turn" evidence="26">
    <location>
        <begin position="827"/>
        <end position="829"/>
    </location>
</feature>
<feature type="strand" evidence="27">
    <location>
        <begin position="831"/>
        <end position="836"/>
    </location>
</feature>
<feature type="strand" evidence="27">
    <location>
        <begin position="842"/>
        <end position="848"/>
    </location>
</feature>
<feature type="helix" evidence="27">
    <location>
        <begin position="851"/>
        <end position="857"/>
    </location>
</feature>
<feature type="turn" evidence="27">
    <location>
        <begin position="858"/>
        <end position="860"/>
    </location>
</feature>
<feature type="helix" evidence="27">
    <location>
        <begin position="866"/>
        <end position="876"/>
    </location>
</feature>
<feature type="helix" evidence="27">
    <location>
        <begin position="879"/>
        <end position="881"/>
    </location>
</feature>
<feature type="helix" evidence="27">
    <location>
        <begin position="883"/>
        <end position="885"/>
    </location>
</feature>
<feature type="strand" evidence="27">
    <location>
        <begin position="892"/>
        <end position="894"/>
    </location>
</feature>
<feature type="helix" evidence="27">
    <location>
        <begin position="899"/>
        <end position="904"/>
    </location>
</feature>
<feature type="strand" evidence="27">
    <location>
        <begin position="906"/>
        <end position="911"/>
    </location>
</feature>
<feature type="turn" evidence="27">
    <location>
        <begin position="912"/>
        <end position="914"/>
    </location>
</feature>
<feature type="strand" evidence="27">
    <location>
        <begin position="917"/>
        <end position="922"/>
    </location>
</feature>
<feature type="strand" evidence="27">
    <location>
        <begin position="929"/>
        <end position="933"/>
    </location>
</feature>
<keyword id="KW-0002">3D-structure</keyword>
<keyword id="KW-0130">Cell adhesion</keyword>
<keyword id="KW-0998">Cell outer membrane</keyword>
<keyword id="KW-1015">Disulfide bond</keyword>
<keyword id="KW-0472">Membrane</keyword>
<keyword id="KW-1185">Reference proteome</keyword>
<keyword id="KW-0677">Repeat</keyword>
<keyword id="KW-0732">Signal</keyword>
<keyword id="KW-0843">Virulence</keyword>
<protein>
    <recommendedName>
        <fullName evidence="11 12 13 16">Intimin</fullName>
    </recommendedName>
    <alternativeName>
        <fullName>Attaching and effacing protein</fullName>
        <shortName>Eae protein</shortName>
    </alternativeName>
    <alternativeName>
        <fullName evidence="11">Gamma-intimin</fullName>
    </alternativeName>
</protein>
<dbReference type="EMBL" id="Z11541">
    <property type="protein sequence ID" value="CAA77642.1"/>
    <property type="molecule type" value="Genomic_DNA"/>
</dbReference>
<dbReference type="EMBL" id="X60439">
    <property type="protein sequence ID" value="CAA42967.1"/>
    <property type="molecule type" value="Genomic_DNA"/>
</dbReference>
<dbReference type="EMBL" id="AF071034">
    <property type="protein sequence ID" value="AAC31504.1"/>
    <property type="molecule type" value="Genomic_DNA"/>
</dbReference>
<dbReference type="EMBL" id="AF081182">
    <property type="protein sequence ID" value="AAD05498.1"/>
    <property type="molecule type" value="Genomic_DNA"/>
</dbReference>
<dbReference type="EMBL" id="AF081183">
    <property type="protein sequence ID" value="AAD05499.1"/>
    <property type="molecule type" value="Genomic_DNA"/>
</dbReference>
<dbReference type="EMBL" id="AE005174">
    <property type="protein sequence ID" value="AAG58823.1"/>
    <property type="molecule type" value="Genomic_DNA"/>
</dbReference>
<dbReference type="EMBL" id="BA000007">
    <property type="protein sequence ID" value="BAB37982.1"/>
    <property type="molecule type" value="Genomic_DNA"/>
</dbReference>
<dbReference type="EMBL" id="U32312">
    <property type="protein sequence ID" value="AAB00111.1"/>
    <property type="molecule type" value="Genomic_DNA"/>
</dbReference>
<dbReference type="EMBL" id="L08095">
    <property type="protein sequence ID" value="AAA21468.1"/>
    <property type="molecule type" value="Genomic_DNA"/>
</dbReference>
<dbReference type="PIR" id="C86045">
    <property type="entry name" value="C86045"/>
</dbReference>
<dbReference type="PIR" id="G91198">
    <property type="entry name" value="G91198"/>
</dbReference>
<dbReference type="PIR" id="I41193">
    <property type="entry name" value="I41193"/>
</dbReference>
<dbReference type="RefSeq" id="NP_312586.1">
    <property type="nucleotide sequence ID" value="NC_002695.1"/>
</dbReference>
<dbReference type="RefSeq" id="WP_000627885.1">
    <property type="nucleotide sequence ID" value="NZ_VOAI01000011.1"/>
</dbReference>
<dbReference type="PDB" id="2ZQK">
    <property type="method" value="X-ray"/>
    <property type="resolution" value="2.80 A"/>
    <property type="chains" value="A/B=747-934"/>
</dbReference>
<dbReference type="PDB" id="2ZWK">
    <property type="method" value="X-ray"/>
    <property type="resolution" value="3.10 A"/>
    <property type="chains" value="A/C/E=752-934"/>
</dbReference>
<dbReference type="PDB" id="3NCW">
    <property type="method" value="X-ray"/>
    <property type="resolution" value="2.80 A"/>
    <property type="chains" value="A/B/C/D=747-934"/>
</dbReference>
<dbReference type="PDB" id="3NCX">
    <property type="method" value="X-ray"/>
    <property type="resolution" value="2.60 A"/>
    <property type="chains" value="A/B=747-934"/>
</dbReference>
<dbReference type="PDB" id="4E1S">
    <property type="method" value="X-ray"/>
    <property type="resolution" value="1.86 A"/>
    <property type="chains" value="A=208-449"/>
</dbReference>
<dbReference type="PDB" id="5G26">
    <property type="method" value="X-ray"/>
    <property type="resolution" value="2.42 A"/>
    <property type="chains" value="A=208-449"/>
</dbReference>
<dbReference type="PDBsum" id="2ZQK"/>
<dbReference type="PDBsum" id="2ZWK"/>
<dbReference type="PDBsum" id="3NCW"/>
<dbReference type="PDBsum" id="3NCX"/>
<dbReference type="PDBsum" id="4E1S"/>
<dbReference type="PDBsum" id="5G26"/>
<dbReference type="BMRB" id="P43261"/>
<dbReference type="SMR" id="P43261"/>
<dbReference type="STRING" id="155864.Z5110"/>
<dbReference type="TCDB" id="1.B.54.1.1">
    <property type="family name" value="the intimin/invasin (int/inv) or autotransporter-3 (at-3) family"/>
</dbReference>
<dbReference type="GeneID" id="915471"/>
<dbReference type="KEGG" id="ece:Z5110"/>
<dbReference type="KEGG" id="ecs:ECs_4559"/>
<dbReference type="PATRIC" id="fig|386585.9.peg.4776"/>
<dbReference type="eggNOG" id="COG5492">
    <property type="taxonomic scope" value="Bacteria"/>
</dbReference>
<dbReference type="HOGENOM" id="CLU_000210_1_1_6"/>
<dbReference type="OMA" id="PWSQQIE"/>
<dbReference type="EvolutionaryTrace" id="P43261"/>
<dbReference type="PHI-base" id="PHI:7913"/>
<dbReference type="Proteomes" id="UP000000558">
    <property type="component" value="Chromosome"/>
</dbReference>
<dbReference type="Proteomes" id="UP000002519">
    <property type="component" value="Chromosome"/>
</dbReference>
<dbReference type="GO" id="GO:0009279">
    <property type="term" value="C:cell outer membrane"/>
    <property type="evidence" value="ECO:0007669"/>
    <property type="project" value="UniProtKB-SubCell"/>
</dbReference>
<dbReference type="GO" id="GO:0007155">
    <property type="term" value="P:cell adhesion"/>
    <property type="evidence" value="ECO:0007669"/>
    <property type="project" value="InterPro"/>
</dbReference>
<dbReference type="FunFam" id="2.60.40.10:FF:000182">
    <property type="entry name" value="Gamma intimin"/>
    <property type="match status" value="2"/>
</dbReference>
<dbReference type="FunFam" id="2.60.40.1080:FF:000005">
    <property type="entry name" value="Intimin"/>
    <property type="match status" value="1"/>
</dbReference>
<dbReference type="FunFam" id="3.10.100.10:FF:000132">
    <property type="entry name" value="Intimin"/>
    <property type="match status" value="1"/>
</dbReference>
<dbReference type="FunFam" id="2.40.160.160:FF:000001">
    <property type="entry name" value="Intimin-like inverse autotransporter SinH"/>
    <property type="match status" value="1"/>
</dbReference>
<dbReference type="Gene3D" id="2.60.40.1080">
    <property type="match status" value="1"/>
</dbReference>
<dbReference type="Gene3D" id="2.60.40.10">
    <property type="entry name" value="Immunoglobulins"/>
    <property type="match status" value="2"/>
</dbReference>
<dbReference type="Gene3D" id="2.40.160.160">
    <property type="entry name" value="Inverse autotransporter, beta-domain"/>
    <property type="match status" value="1"/>
</dbReference>
<dbReference type="Gene3D" id="3.10.100.10">
    <property type="entry name" value="Mannose-Binding Protein A, subunit A"/>
    <property type="match status" value="1"/>
</dbReference>
<dbReference type="InterPro" id="IPR003344">
    <property type="entry name" value="Big_1_dom"/>
</dbReference>
<dbReference type="InterPro" id="IPR003343">
    <property type="entry name" value="Big_2"/>
</dbReference>
<dbReference type="InterPro" id="IPR016186">
    <property type="entry name" value="C-type_lectin-like/link_sf"/>
</dbReference>
<dbReference type="InterPro" id="IPR016187">
    <property type="entry name" value="CTDL_fold"/>
</dbReference>
<dbReference type="InterPro" id="IPR024519">
    <property type="entry name" value="IAT_beta"/>
</dbReference>
<dbReference type="InterPro" id="IPR038177">
    <property type="entry name" value="IAT_beta_sf"/>
</dbReference>
<dbReference type="InterPro" id="IPR013783">
    <property type="entry name" value="Ig-like_fold"/>
</dbReference>
<dbReference type="InterPro" id="IPR051715">
    <property type="entry name" value="Intimin-Invasin_domain"/>
</dbReference>
<dbReference type="InterPro" id="IPR003535">
    <property type="entry name" value="Intimin/invasin_bac"/>
</dbReference>
<dbReference type="InterPro" id="IPR013117">
    <property type="entry name" value="Intimin_C"/>
</dbReference>
<dbReference type="InterPro" id="IPR008964">
    <property type="entry name" value="Invasin/intimin_cell_adhesion"/>
</dbReference>
<dbReference type="InterPro" id="IPR018392">
    <property type="entry name" value="LysM_dom"/>
</dbReference>
<dbReference type="NCBIfam" id="NF033627">
    <property type="entry name" value="intimin_all"/>
    <property type="match status" value="1"/>
</dbReference>
<dbReference type="PANTHER" id="PTHR39576:SF2">
    <property type="entry name" value="ATTACHING AND EFFACING PROTEIN HOMOLOG-RELATED"/>
    <property type="match status" value="1"/>
</dbReference>
<dbReference type="PANTHER" id="PTHR39576">
    <property type="entry name" value="ATTACHING AND EFFACING PROTEIN HOMOLOG-RELATED-RELATED"/>
    <property type="match status" value="1"/>
</dbReference>
<dbReference type="Pfam" id="PF02369">
    <property type="entry name" value="Big_1"/>
    <property type="match status" value="2"/>
</dbReference>
<dbReference type="Pfam" id="PF02368">
    <property type="entry name" value="Big_2"/>
    <property type="match status" value="1"/>
</dbReference>
<dbReference type="Pfam" id="PF11924">
    <property type="entry name" value="IAT_beta"/>
    <property type="match status" value="1"/>
</dbReference>
<dbReference type="Pfam" id="PF07979">
    <property type="entry name" value="Intimin_C"/>
    <property type="match status" value="1"/>
</dbReference>
<dbReference type="Pfam" id="PF01476">
    <property type="entry name" value="LysM"/>
    <property type="match status" value="1"/>
</dbReference>
<dbReference type="PRINTS" id="PR01369">
    <property type="entry name" value="INTIMIN"/>
</dbReference>
<dbReference type="SMART" id="SM00634">
    <property type="entry name" value="BID_1"/>
    <property type="match status" value="2"/>
</dbReference>
<dbReference type="SMART" id="SM00635">
    <property type="entry name" value="BID_2"/>
    <property type="match status" value="1"/>
</dbReference>
<dbReference type="SMART" id="SM00257">
    <property type="entry name" value="LysM"/>
    <property type="match status" value="1"/>
</dbReference>
<dbReference type="SUPFAM" id="SSF56436">
    <property type="entry name" value="C-type lectin-like"/>
    <property type="match status" value="1"/>
</dbReference>
<dbReference type="SUPFAM" id="SSF49373">
    <property type="entry name" value="Invasin/intimin cell-adhesion fragments"/>
    <property type="match status" value="3"/>
</dbReference>
<dbReference type="PROSITE" id="PS51127">
    <property type="entry name" value="BIG1"/>
    <property type="match status" value="2"/>
</dbReference>
<dbReference type="PROSITE" id="PS51782">
    <property type="entry name" value="LYSM"/>
    <property type="match status" value="1"/>
</dbReference>
<reference key="1">
    <citation type="journal article" date="1992" name="Mol. Microbiol.">
        <title>Cloning and characterization of the eae gene of enterohaemorrhagic Escherichia coli O157:H7.</title>
        <authorList>
            <person name="Yu J."/>
            <person name="Kaper J.B."/>
        </authorList>
    </citation>
    <scope>NUCLEOTIDE SEQUENCE [GENOMIC DNA]</scope>
    <source>
        <strain>O157:H7 / EDL933 / ATCC 700927 / EHEC</strain>
    </source>
</reference>
<reference key="2">
    <citation type="journal article" date="1992" name="FEMS Microbiol. Lett.">
        <title>Cloning and nucleotide sequence of the eae gene homologue from enterohemorrhagic Escherichia coli serotype O157:H7.</title>
        <authorList>
            <person name="Beebakhee G."/>
            <person name="Louie M."/>
            <person name="de Azavedo J."/>
            <person name="Brunton J."/>
        </authorList>
    </citation>
    <scope>NUCLEOTIDE SEQUENCE [GENOMIC DNA]</scope>
    <source>
        <strain>O157:H7 / CL-8</strain>
    </source>
</reference>
<reference key="3">
    <citation type="journal article" date="1998" name="Infect. Immun.">
        <title>Molecular evolution of a pathogenicity island from enterohemorrhagic Escherichia coli O157:H7.</title>
        <authorList>
            <person name="Perna N.T."/>
            <person name="Mayhew G.F."/>
            <person name="Posfai G."/>
            <person name="Elliott S."/>
            <person name="Donnenberg M.S."/>
            <person name="Kaper J.B."/>
            <person name="Blattner F.R."/>
        </authorList>
    </citation>
    <scope>NUCLEOTIDE SEQUENCE [GENOMIC DNA]</scope>
    <source>
        <strain>O157:H7 / EDL933 / ATCC 700927 / EHEC</strain>
    </source>
</reference>
<reference key="4">
    <citation type="journal article" date="1999" name="Mol. Biol. Evol.">
        <title>Molecular evolution and mosaic structure of alpha, beta, and gamma intimins of pathogenic Escherichia coli.</title>
        <authorList>
            <person name="McGraw E.A."/>
            <person name="Li J."/>
            <person name="Selander R.K."/>
            <person name="Whittam T.S."/>
        </authorList>
    </citation>
    <scope>NUCLEOTIDE SEQUENCE [GENOMIC DNA]</scope>
    <source>
        <strain>O157:H- / DEC 3f / EHEC</strain>
        <strain>O157:H7 / DEC 3a / EHEC</strain>
    </source>
</reference>
<reference key="5">
    <citation type="journal article" date="2001" name="Nature">
        <title>Genome sequence of enterohaemorrhagic Escherichia coli O157:H7.</title>
        <authorList>
            <person name="Perna N.T."/>
            <person name="Plunkett G. III"/>
            <person name="Burland V."/>
            <person name="Mau B."/>
            <person name="Glasner J.D."/>
            <person name="Rose D.J."/>
            <person name="Mayhew G.F."/>
            <person name="Evans P.S."/>
            <person name="Gregor J."/>
            <person name="Kirkpatrick H.A."/>
            <person name="Posfai G."/>
            <person name="Hackett J."/>
            <person name="Klink S."/>
            <person name="Boutin A."/>
            <person name="Shao Y."/>
            <person name="Miller L."/>
            <person name="Grotbeck E.J."/>
            <person name="Davis N.W."/>
            <person name="Lim A."/>
            <person name="Dimalanta E.T."/>
            <person name="Potamousis K."/>
            <person name="Apodaca J."/>
            <person name="Anantharaman T.S."/>
            <person name="Lin J."/>
            <person name="Yen G."/>
            <person name="Schwartz D.C."/>
            <person name="Welch R.A."/>
            <person name="Blattner F.R."/>
        </authorList>
    </citation>
    <scope>NUCLEOTIDE SEQUENCE [LARGE SCALE GENOMIC DNA]</scope>
    <source>
        <strain>O157:H7 / EDL933 / ATCC 700927 / EHEC</strain>
    </source>
</reference>
<reference key="6">
    <citation type="journal article" date="2001" name="DNA Res.">
        <title>Complete genome sequence of enterohemorrhagic Escherichia coli O157:H7 and genomic comparison with a laboratory strain K-12.</title>
        <authorList>
            <person name="Hayashi T."/>
            <person name="Makino K."/>
            <person name="Ohnishi M."/>
            <person name="Kurokawa K."/>
            <person name="Ishii K."/>
            <person name="Yokoyama K."/>
            <person name="Han C.-G."/>
            <person name="Ohtsubo E."/>
            <person name="Nakayama K."/>
            <person name="Murata T."/>
            <person name="Tanaka M."/>
            <person name="Tobe T."/>
            <person name="Iida T."/>
            <person name="Takami H."/>
            <person name="Honda T."/>
            <person name="Sasakawa C."/>
            <person name="Ogasawara N."/>
            <person name="Yasunaga T."/>
            <person name="Kuhara S."/>
            <person name="Shiba T."/>
            <person name="Hattori M."/>
            <person name="Shinagawa H."/>
        </authorList>
    </citation>
    <scope>NUCLEOTIDE SEQUENCE [LARGE SCALE GENOMIC DNA]</scope>
    <source>
        <strain>O157:H7 / Sakai / RIMD 0509952 / EHEC</strain>
    </source>
</reference>
<reference key="7">
    <citation type="journal article" date="1995" name="FEMS Microbiol. Lett.">
        <title>Cloning and nucleotide sequence of a gene upstream of the eaeA gene of enterohemorrhagic Escherichia coli O157:H7.</title>
        <authorList>
            <person name="Zhao S."/>
            <person name="Mitchell S.E."/>
            <person name="Meng J."/>
            <person name="Doyle M.P."/>
            <person name="Kresovich S."/>
        </authorList>
    </citation>
    <scope>NUCLEOTIDE SEQUENCE [GENOMIC DNA] OF 1-37</scope>
    <source>
        <strain>O157:H7 / HA1 / EHEC</strain>
    </source>
</reference>
<reference key="8">
    <citation type="journal article" date="1994" name="Epidemiol. Infect.">
        <title>Sequence heterogeneity of the eae gene and detection of verotoxin-producing Escherichia coli using serotype-specific primers.</title>
        <authorList>
            <person name="Louie M."/>
            <person name="de Azavedo J."/>
            <person name="Clarke R."/>
            <person name="Borczyk A."/>
            <person name="Lior H."/>
            <person name="Richter M."/>
            <person name="Brunton J."/>
        </authorList>
    </citation>
    <scope>NUCLEOTIDE SEQUENCE [GENOMIC DNA] OF 684-928</scope>
</reference>
<reference evidence="20 21" key="9">
    <citation type="submission" date="2008-12" db="PDB data bank">
        <title>Structural insight into the interaction between intimin and Tir of enterohaemorrhagic E coli: evidence for a dynamic sequential clustering-aggregating-reticulating model.</title>
        <authorList>
            <person name="Ma Y."/>
            <person name="Zou Q."/>
            <person name="Gao G.F."/>
        </authorList>
    </citation>
    <scope>X-RAY CRYSTALLOGRAPHY (2.80 ANGSTROMS) OF 747-934 IN COMPLEXES WITH 269-336 OF TRANSLOCATED INTIMIN RECEPTOR TIR</scope>
    <scope>INTERACTION WITH TIR</scope>
</reference>
<reference evidence="22 23" key="10">
    <citation type="journal article" date="2010" name="PLoS ONE">
        <title>Crystal structure of EHEC intimin: insights into the complementarity between EPEC and EHEC.</title>
        <authorList>
            <person name="Yi Y."/>
            <person name="Ma Y."/>
            <person name="Gao F."/>
            <person name="Mao X."/>
            <person name="Peng H."/>
            <person name="Feng Y."/>
            <person name="Fan Z."/>
            <person name="Wang G."/>
            <person name="Guo G."/>
            <person name="Yan J."/>
            <person name="Zeng H."/>
            <person name="Zou Q."/>
            <person name="Gao G.F."/>
        </authorList>
    </citation>
    <scope>X-RAY CRYSTALLOGRAPHY (2.60 ANGSTROMS) OF 747-934 AND OF MUTANT TYR-916</scope>
    <scope>REGION</scope>
    <scope>DISULFIDE BOND</scope>
    <source>
        <strain evidence="11">O157:H7 / EDL933 / ATCC 700927 / EHEC</strain>
    </source>
</reference>
<reference evidence="24" key="11">
    <citation type="journal article" date="2012" name="Structure">
        <title>Crystal structures of the outer membrane domain of intimin and invasin from enterohemorrhagic E. coli and enteropathogenic Y. pseudotuberculosis.</title>
        <authorList>
            <person name="Fairman J.W."/>
            <person name="Dautin N."/>
            <person name="Wojtowicz D."/>
            <person name="Liu W."/>
            <person name="Noinaj N."/>
            <person name="Barnard T.J."/>
            <person name="Udho E."/>
            <person name="Przytycka T.M."/>
            <person name="Cherezov V."/>
            <person name="Buchanan S.K."/>
        </authorList>
    </citation>
    <scope>X-RAY CRYSTALLOGRAPHY (1.85 ANGSTROMS) OF 208-449</scope>
    <scope>SUBCELLULAR LOCATION</scope>
    <scope>DOMAIN</scope>
    <scope>REGIONS</scope>
    <scope>MUTAGENESIS OF ASP-236; ASP-279; 401-LEU--GLU-934; 412-ASP--GLU-934; 414-SER--SER-433; 431-SER--GLU-934; ARG-434; 435-TYR--GLU-934; ASP-436; 437-LEU--GLU-934; 439-GLN--GLU-934; ARG-440; 441-ASN--GLU-934; 443-ASN--GLU-934; 445-ILE--GLU-934; 447-GLU--GLU-934; 449-LYS--GLU-934; 451-GLN--GLU-934; 501-ASN--GLU-934; 531-ALA--GLU-934 AND 551-ASN--GLU-934</scope>
    <source>
        <strain evidence="12">O157:H7 / EDL933 / ATCC 700927 / EHEC</strain>
    </source>
</reference>
<reference evidence="25" key="12">
    <citation type="journal article" date="2017" name="Nanoscale">
        <title>The nanoscience behind the art of in-meso crystallization of membrane proteins.</title>
        <authorList>
            <person name="Zabara A."/>
            <person name="Meikle T.G."/>
            <person name="Newman J."/>
            <person name="Peat T.S."/>
            <person name="Conn C.E."/>
            <person name="Drummond C.J."/>
        </authorList>
    </citation>
    <scope>X-RAY CRYSTALLOGRAPHY (2.42 ANGSTROMS) OF 208-449</scope>
    <scope>SUBCELLULAR LOCATION</scope>
</reference>
<organism>
    <name type="scientific">Escherichia coli O157:H7</name>
    <dbReference type="NCBI Taxonomy" id="83334"/>
    <lineage>
        <taxon>Bacteria</taxon>
        <taxon>Pseudomonadati</taxon>
        <taxon>Pseudomonadota</taxon>
        <taxon>Gammaproteobacteria</taxon>
        <taxon>Enterobacterales</taxon>
        <taxon>Enterobacteriaceae</taxon>
        <taxon>Escherichia</taxon>
    </lineage>
</organism>